<feature type="chain" id="PRO_0000065388" description="WASH complex subunit homolog 3">
    <location>
        <begin position="1"/>
        <end position="189"/>
    </location>
</feature>
<feature type="region of interest" description="Disordered" evidence="3">
    <location>
        <begin position="76"/>
        <end position="101"/>
    </location>
</feature>
<feature type="region of interest" description="Disordered" evidence="3">
    <location>
        <begin position="150"/>
        <end position="189"/>
    </location>
</feature>
<feature type="coiled-coil region" evidence="2">
    <location>
        <begin position="35"/>
        <end position="74"/>
    </location>
</feature>
<feature type="compositionally biased region" description="Basic and acidic residues" evidence="3">
    <location>
        <begin position="150"/>
        <end position="165"/>
    </location>
</feature>
<feature type="compositionally biased region" description="Polar residues" evidence="3">
    <location>
        <begin position="167"/>
        <end position="189"/>
    </location>
</feature>
<feature type="modified residue" description="Phosphothreonine" evidence="4">
    <location>
        <position position="182"/>
    </location>
</feature>
<feature type="mutagenesis site" description="Abolishes threonine phosphorylation." evidence="4">
    <original>T</original>
    <variation>A</variation>
    <location>
        <position position="182"/>
    </location>
</feature>
<comment type="function">
    <text evidence="1 4">Acts as a component of the WASH core complex that functions as a nucleation-promoting factor (NPF) at the surface of endosomes, where it recruits and activates the Arp2/3 complex to induce actin polymerization, playing a key role in the fission of tubules that serve as transport intermediates during endosome sorting (By similarity). Acts as a component of the DHIC (ddl-1-containing hsf-1 inhibitory complex) which modulates lifespan by sequestering the heat-shock transcription factor hsf-1 to negatively regulate its binding to DNA and its transcriptional activity (PubMed:22265419).</text>
</comment>
<comment type="subunit">
    <text evidence="1 4">Probable component of the WASH complex (By similarity). Component of the DHIC (ddl-1-containing hsf-1 inhibitory complex), which contains at least ddl-1, ddl-2, hsb-1 and hsf-1 (PubMed:22265419). Within the complex, interacts with ddl-2 (PubMed:22265419). Within the complex, interacts with hsb-1 (PubMed:22265419). Within the complex, interacts with hsf-1 (PubMed:22265419). Formation of the DHIC may be dependent upon the Insulin/IGF-1-like signaling (IIS) mediated pathway (PubMed:22265419).</text>
</comment>
<comment type="interaction">
    <interactant intactId="EBI-323542">
        <id>O01901</id>
    </interactant>
    <interactant intactId="EBI-313368">
        <id>O18195</id>
        <label>ddl-2</label>
    </interactant>
    <organismsDiffer>false</organismsDiffer>
    <experiments>6</experiments>
</comment>
<comment type="interaction">
    <interactant intactId="EBI-323542">
        <id>O01901</id>
    </interactant>
    <interactant intactId="EBI-311898">
        <id>Q9U3B7</id>
        <label>hsb-1</label>
    </interactant>
    <organismsDiffer>false</organismsDiffer>
    <experiments>5</experiments>
</comment>
<comment type="interaction">
    <interactant intactId="EBI-323542">
        <id>O01901</id>
    </interactant>
    <interactant intactId="EBI-2916699">
        <id>G5EFT5</id>
        <label>hsf-1</label>
    </interactant>
    <organismsDiffer>false</organismsDiffer>
    <experiments>3</experiments>
</comment>
<comment type="interaction">
    <interactant intactId="EBI-323542">
        <id>O01901</id>
    </interactant>
    <interactant intactId="EBI-320612">
        <id>G5ECG0</id>
        <label>tac-1</label>
    </interactant>
    <organismsDiffer>false</organismsDiffer>
    <experiments>3</experiments>
</comment>
<comment type="interaction">
    <interactant intactId="EBI-323542">
        <id>O01901</id>
    </interactant>
    <interactant intactId="EBI-312105">
        <id>Q9XVK6</id>
        <label>wve-1</label>
    </interactant>
    <organismsDiffer>false</organismsDiffer>
    <experiments>3</experiments>
</comment>
<comment type="tissue specificity">
    <text evidence="4">Expressed in pharynx, intestine, body wall muscles, vulva muscles, spermatheca, and several head and tail neurons.</text>
</comment>
<comment type="PTM">
    <text evidence="4">Phosphorylated (PubMed:22265419). Phosphorylation on Thr-182 may promote DHIC complex dissociation and consequently the activation of heat-shock transcription factor hsf-1 (PubMed:22265419). Phosphorylation is modulated by the Insulin/IGF-1-like signaling (IIS) mediated pathway (PubMed:22265419).</text>
</comment>
<comment type="disruption phenotype">
    <text evidence="4">RNAi-mediated knockdown positively modulates lifespan; effect abolished in hsf-1 mutant background (PubMed:22265419). Increases resistance to both heat and oxidative stresses (PubMed:22265419). Increases localization to the nucleus and also DNA binding activity of heat-shock transcription factor hsf-1 both before and after heat shock (PubMed:22265419). Increases in transcript levels of heat-shock protein genes sim-1, hsp-70, hsp-16.2 and F44E5.5 after heat shock, but not in unstressed conditions (PubMed:22265419). May also increase levels of post-translationally modified hsf-1 under heat stressed and unstressed conditions (PubMed:22265419).</text>
</comment>
<comment type="similarity">
    <text evidence="5">Belongs to the CCDC53 family.</text>
</comment>
<organism>
    <name type="scientific">Caenorhabditis elegans</name>
    <dbReference type="NCBI Taxonomy" id="6239"/>
    <lineage>
        <taxon>Eukaryota</taxon>
        <taxon>Metazoa</taxon>
        <taxon>Ecdysozoa</taxon>
        <taxon>Nematoda</taxon>
        <taxon>Chromadorea</taxon>
        <taxon>Rhabditida</taxon>
        <taxon>Rhabditina</taxon>
        <taxon>Rhabditomorpha</taxon>
        <taxon>Rhabditoidea</taxon>
        <taxon>Rhabditidae</taxon>
        <taxon>Peloderinae</taxon>
        <taxon>Caenorhabditis</taxon>
    </lineage>
</organism>
<evidence type="ECO:0000250" key="1">
    <source>
        <dbReference type="UniProtKB" id="Q9Y3C0"/>
    </source>
</evidence>
<evidence type="ECO:0000255" key="2"/>
<evidence type="ECO:0000256" key="3">
    <source>
        <dbReference type="SAM" id="MobiDB-lite"/>
    </source>
</evidence>
<evidence type="ECO:0000269" key="4">
    <source>
    </source>
</evidence>
<evidence type="ECO:0000305" key="5"/>
<evidence type="ECO:0000312" key="6">
    <source>
        <dbReference type="WormBase" id="F59E12.10"/>
    </source>
</evidence>
<protein>
    <recommendedName>
        <fullName evidence="1">WASH complex subunit homolog 3</fullName>
    </recommendedName>
    <alternativeName>
        <fullName evidence="6">Daf-16-dependent longevity protein 1</fullName>
    </alternativeName>
</protein>
<reference key="1">
    <citation type="journal article" date="1998" name="Science">
        <title>Genome sequence of the nematode C. elegans: a platform for investigating biology.</title>
        <authorList>
            <consortium name="The C. elegans sequencing consortium"/>
        </authorList>
    </citation>
    <scope>NUCLEOTIDE SEQUENCE [LARGE SCALE GENOMIC DNA]</scope>
    <source>
        <strain>Bristol N2</strain>
    </source>
</reference>
<reference key="2">
    <citation type="journal article" date="2012" name="Cell">
        <title>HSF-1 regulators DDL-1/2 link insulin-like signaling to heat-shock responses and modulation of longevity.</title>
        <authorList>
            <person name="Chiang W.C."/>
            <person name="Ching T.T."/>
            <person name="Lee H.C."/>
            <person name="Mousigian C."/>
            <person name="Hsu A.L."/>
        </authorList>
    </citation>
    <scope>FUNCTION</scope>
    <scope>IDENTIFICATION IN THE DHIC COMPLEX</scope>
    <scope>INTERACTION WITH DDL-2; HSF-1 AND HSB-1</scope>
    <scope>TISSUE SPECIFICITY</scope>
    <scope>PHOSPHORYLATION AT THR-182</scope>
    <scope>DISRUPTION PHENOTYPE</scope>
    <scope>MUTAGENESIS OF THR-182</scope>
</reference>
<proteinExistence type="evidence at protein level"/>
<sequence>MNASSRTKPAIDLNKVPPIDHHRTAVTFNCLIMKMTEMLNNFGNKMEDILEKAEQSLDTADRKLRLMESKLAGMSLEDKSTTATPSSAPEIDEIHESNPSSSQIVEETVEEKPEEHTTTVLIKDDPAYSKYFKMLKLGVLEAGVIQKMKSEGVDPSILKRGDEPSRPQAQTSRNYESSGESTASFSDSD</sequence>
<name>WASC3_CAEEL</name>
<accession>O01901</accession>
<keyword id="KW-0175">Coiled coil</keyword>
<keyword id="KW-0597">Phosphoprotein</keyword>
<keyword id="KW-1185">Reference proteome</keyword>
<dbReference type="EMBL" id="FO080594">
    <property type="protein sequence ID" value="CCD64976.1"/>
    <property type="molecule type" value="Genomic_DNA"/>
</dbReference>
<dbReference type="PIR" id="T15265">
    <property type="entry name" value="T15265"/>
</dbReference>
<dbReference type="RefSeq" id="NP_001370457.1">
    <property type="nucleotide sequence ID" value="NM_001383847.2"/>
</dbReference>
<dbReference type="RefSeq" id="NP_495101.1">
    <property type="nucleotide sequence ID" value="NM_062700.2"/>
</dbReference>
<dbReference type="SMR" id="O01901"/>
<dbReference type="BioGRID" id="39296">
    <property type="interactions" value="10"/>
</dbReference>
<dbReference type="ComplexPortal" id="CPX-4305">
    <property type="entry name" value="DHIC complex"/>
</dbReference>
<dbReference type="DIP" id="DIP-24590N"/>
<dbReference type="FunCoup" id="O01901">
    <property type="interactions" value="1555"/>
</dbReference>
<dbReference type="IntAct" id="O01901">
    <property type="interactions" value="8"/>
</dbReference>
<dbReference type="STRING" id="6239.F59E12.10.1"/>
<dbReference type="iPTMnet" id="O01901"/>
<dbReference type="PaxDb" id="6239-F59E12.10"/>
<dbReference type="PeptideAtlas" id="O01901"/>
<dbReference type="EnsemblMetazoa" id="F59E12.10.1">
    <property type="protein sequence ID" value="F59E12.10.1"/>
    <property type="gene ID" value="WBGene00019125"/>
</dbReference>
<dbReference type="EnsemblMetazoa" id="F59E12.10.2">
    <property type="protein sequence ID" value="F59E12.10.2"/>
    <property type="gene ID" value="WBGene00019125"/>
</dbReference>
<dbReference type="GeneID" id="173954"/>
<dbReference type="UCSC" id="F59E12.10">
    <property type="organism name" value="c. elegans"/>
</dbReference>
<dbReference type="AGR" id="WB:WBGene00019125"/>
<dbReference type="WormBase" id="F59E12.10">
    <property type="protein sequence ID" value="CE11536"/>
    <property type="gene ID" value="WBGene00019125"/>
    <property type="gene designation" value="ddl-1"/>
</dbReference>
<dbReference type="eggNOG" id="KOG4496">
    <property type="taxonomic scope" value="Eukaryota"/>
</dbReference>
<dbReference type="GeneTree" id="ENSGT00390000014084"/>
<dbReference type="HOGENOM" id="CLU_117940_1_0_1"/>
<dbReference type="InParanoid" id="O01901"/>
<dbReference type="OMA" id="FGNKMED"/>
<dbReference type="OrthoDB" id="268027at2759"/>
<dbReference type="PhylomeDB" id="O01901"/>
<dbReference type="PRO" id="PR:O01901"/>
<dbReference type="Proteomes" id="UP000001940">
    <property type="component" value="Chromosome II"/>
</dbReference>
<dbReference type="Bgee" id="WBGene00019125">
    <property type="expression patterns" value="Expressed in germ line (C elegans) and 4 other cell types or tissues"/>
</dbReference>
<dbReference type="GO" id="GO:0005737">
    <property type="term" value="C:cytoplasm"/>
    <property type="evidence" value="ECO:0000314"/>
    <property type="project" value="WormBase"/>
</dbReference>
<dbReference type="GO" id="GO:0071203">
    <property type="term" value="C:WASH complex"/>
    <property type="evidence" value="ECO:0000318"/>
    <property type="project" value="GO_Central"/>
</dbReference>
<dbReference type="GO" id="GO:0030041">
    <property type="term" value="P:actin filament polymerization"/>
    <property type="evidence" value="ECO:0000318"/>
    <property type="project" value="GO_Central"/>
</dbReference>
<dbReference type="GO" id="GO:0008340">
    <property type="term" value="P:determination of adult lifespan"/>
    <property type="evidence" value="ECO:0000315"/>
    <property type="project" value="WormBase"/>
</dbReference>
<dbReference type="GO" id="GO:0006887">
    <property type="term" value="P:exocytosis"/>
    <property type="evidence" value="ECO:0000318"/>
    <property type="project" value="GO_Central"/>
</dbReference>
<dbReference type="GO" id="GO:0010468">
    <property type="term" value="P:regulation of gene expression"/>
    <property type="evidence" value="ECO:0000303"/>
    <property type="project" value="ComplexPortal"/>
</dbReference>
<dbReference type="InterPro" id="IPR019309">
    <property type="entry name" value="WASHC3"/>
</dbReference>
<dbReference type="PANTHER" id="PTHR13015">
    <property type="entry name" value="PROTEIN AD-016-RELATED"/>
    <property type="match status" value="1"/>
</dbReference>
<dbReference type="PANTHER" id="PTHR13015:SF0">
    <property type="entry name" value="WASH COMPLEX SUBUNIT 3"/>
    <property type="match status" value="1"/>
</dbReference>
<dbReference type="Pfam" id="PF10152">
    <property type="entry name" value="CCDC53"/>
    <property type="match status" value="1"/>
</dbReference>
<gene>
    <name type="primary">ddl-1</name>
    <name type="ORF">F59E12.10</name>
</gene>